<comment type="function">
    <text evidence="1">Catalyzes the reduction of hydroxylamine to form NH(3) and H(2)O.</text>
</comment>
<comment type="catalytic activity">
    <reaction evidence="1">
        <text>A + NH4(+) + H2O = hydroxylamine + AH2 + H(+)</text>
        <dbReference type="Rhea" id="RHEA:22052"/>
        <dbReference type="ChEBI" id="CHEBI:13193"/>
        <dbReference type="ChEBI" id="CHEBI:15377"/>
        <dbReference type="ChEBI" id="CHEBI:15378"/>
        <dbReference type="ChEBI" id="CHEBI:15429"/>
        <dbReference type="ChEBI" id="CHEBI:17499"/>
        <dbReference type="ChEBI" id="CHEBI:28938"/>
        <dbReference type="EC" id="1.7.99.1"/>
    </reaction>
</comment>
<comment type="cofactor">
    <cofactor evidence="1">
        <name>[4Fe-4S] cluster</name>
        <dbReference type="ChEBI" id="CHEBI:49883"/>
    </cofactor>
    <text evidence="1">Binds 1 [4Fe-4S] cluster.</text>
</comment>
<comment type="cofactor">
    <cofactor evidence="1">
        <name>hybrid [4Fe-2O-2S] cluster</name>
        <dbReference type="ChEBI" id="CHEBI:60519"/>
    </cofactor>
    <text evidence="1">Binds 1 hybrid [4Fe-2O-2S] cluster.</text>
</comment>
<comment type="subcellular location">
    <subcellularLocation>
        <location evidence="1">Cytoplasm</location>
    </subcellularLocation>
</comment>
<comment type="similarity">
    <text evidence="1">Belongs to the HCP family.</text>
</comment>
<evidence type="ECO:0000255" key="1">
    <source>
        <dbReference type="HAMAP-Rule" id="MF_00069"/>
    </source>
</evidence>
<organism>
    <name type="scientific">Porphyromonas gingivalis (strain ATCC 33277 / DSM 20709 / CIP 103683 / JCM 12257 / NCTC 11834 / 2561)</name>
    <dbReference type="NCBI Taxonomy" id="431947"/>
    <lineage>
        <taxon>Bacteria</taxon>
        <taxon>Pseudomonadati</taxon>
        <taxon>Bacteroidota</taxon>
        <taxon>Bacteroidia</taxon>
        <taxon>Bacteroidales</taxon>
        <taxon>Porphyromonadaceae</taxon>
        <taxon>Porphyromonas</taxon>
    </lineage>
</organism>
<name>HCP_PORG3</name>
<sequence length="550" mass="60476">MEKKMFCYQCQETAGNKGCILKGVCGKDFSTANLMDLLVFNLKGIAIIMTSMRHAGVKADYRKADKAIMESLFATITNANFDYSSIAKRVEKTFALKAELYSLALTQGIELPENEAVTMQGKPEEYDRLALSVGILRETDEDVRSLKELTIYGLKGLAAYAEHADRLGYVDEEINAFTERALHDVTMGLLSAEELTALVLETGSFGVKVMALLDKANTETYGNPEITEVNIGVGSRPGILISGHDLKDMEMLLEQTEGTGIDVYTHGEMLPANYYPKFKKYNHFFGNYGNAWWKQREEFETFNGPILFTTNCIVPPKANASYKDRVFTTNATGYPGFKYIESDEHGRKDFSEIIALAKTCQPPTEIESGTIIGGFAHHQVLSIADKVVEAVSSGAIRKFVVMSGCDGRQSGRNYYTEFAEALPSDTVILTSGCAKFRYNKLQLGNIGGIPRVLDAGQCNDSYSLAVIALKLKEVMGLDDINKLPIVYNIAWYEQKAVIVLLALLSLGVKNIHVGPTLPAFLSPNVAKVLIENFGIAGIGTVEEDIRTLIA</sequence>
<gene>
    <name evidence="1" type="primary">hcp</name>
    <name type="ordered locus">PGN_1047</name>
</gene>
<proteinExistence type="inferred from homology"/>
<dbReference type="EC" id="1.7.99.1" evidence="1"/>
<dbReference type="EMBL" id="AP009380">
    <property type="protein sequence ID" value="BAG33566.1"/>
    <property type="molecule type" value="Genomic_DNA"/>
</dbReference>
<dbReference type="RefSeq" id="WP_012457983.1">
    <property type="nucleotide sequence ID" value="NZ_CP025930.1"/>
</dbReference>
<dbReference type="SMR" id="B2RJM1"/>
<dbReference type="GeneID" id="29256258"/>
<dbReference type="KEGG" id="pgn:PGN_1047"/>
<dbReference type="eggNOG" id="COG1151">
    <property type="taxonomic scope" value="Bacteria"/>
</dbReference>
<dbReference type="HOGENOM" id="CLU_038344_2_0_10"/>
<dbReference type="OrthoDB" id="9761526at2"/>
<dbReference type="BioCyc" id="PGIN431947:G1G2V-1184-MONOMER"/>
<dbReference type="Proteomes" id="UP000008842">
    <property type="component" value="Chromosome"/>
</dbReference>
<dbReference type="GO" id="GO:0005737">
    <property type="term" value="C:cytoplasm"/>
    <property type="evidence" value="ECO:0007669"/>
    <property type="project" value="UniProtKB-SubCell"/>
</dbReference>
<dbReference type="GO" id="GO:0051539">
    <property type="term" value="F:4 iron, 4 sulfur cluster binding"/>
    <property type="evidence" value="ECO:0007669"/>
    <property type="project" value="UniProtKB-KW"/>
</dbReference>
<dbReference type="GO" id="GO:0050418">
    <property type="term" value="F:hydroxylamine reductase activity"/>
    <property type="evidence" value="ECO:0007669"/>
    <property type="project" value="UniProtKB-UniRule"/>
</dbReference>
<dbReference type="GO" id="GO:0046872">
    <property type="term" value="F:metal ion binding"/>
    <property type="evidence" value="ECO:0007669"/>
    <property type="project" value="UniProtKB-KW"/>
</dbReference>
<dbReference type="GO" id="GO:0004601">
    <property type="term" value="F:peroxidase activity"/>
    <property type="evidence" value="ECO:0007669"/>
    <property type="project" value="TreeGrafter"/>
</dbReference>
<dbReference type="GO" id="GO:0042542">
    <property type="term" value="P:response to hydrogen peroxide"/>
    <property type="evidence" value="ECO:0007669"/>
    <property type="project" value="TreeGrafter"/>
</dbReference>
<dbReference type="CDD" id="cd01914">
    <property type="entry name" value="HCP"/>
    <property type="match status" value="1"/>
</dbReference>
<dbReference type="FunFam" id="1.20.1270.20:FF:000001">
    <property type="entry name" value="Hydroxylamine reductase"/>
    <property type="match status" value="1"/>
</dbReference>
<dbReference type="FunFam" id="3.40.50.2030:FF:000001">
    <property type="entry name" value="Hydroxylamine reductase"/>
    <property type="match status" value="1"/>
</dbReference>
<dbReference type="FunFam" id="3.40.50.2030:FF:000002">
    <property type="entry name" value="Hydroxylamine reductase"/>
    <property type="match status" value="1"/>
</dbReference>
<dbReference type="Gene3D" id="1.20.1270.20">
    <property type="match status" value="2"/>
</dbReference>
<dbReference type="Gene3D" id="3.40.50.2030">
    <property type="match status" value="2"/>
</dbReference>
<dbReference type="HAMAP" id="MF_00069">
    <property type="entry name" value="Hydroxylam_reduct"/>
    <property type="match status" value="1"/>
</dbReference>
<dbReference type="InterPro" id="IPR004137">
    <property type="entry name" value="HCP/CODH"/>
</dbReference>
<dbReference type="InterPro" id="IPR010048">
    <property type="entry name" value="Hydroxylam_reduct"/>
</dbReference>
<dbReference type="InterPro" id="IPR016099">
    <property type="entry name" value="Prismane-like_a/b-sand"/>
</dbReference>
<dbReference type="InterPro" id="IPR011254">
    <property type="entry name" value="Prismane-like_sf"/>
</dbReference>
<dbReference type="InterPro" id="IPR016100">
    <property type="entry name" value="Prismane_a-bundle"/>
</dbReference>
<dbReference type="NCBIfam" id="TIGR01703">
    <property type="entry name" value="hybrid_clust"/>
    <property type="match status" value="1"/>
</dbReference>
<dbReference type="NCBIfam" id="NF003658">
    <property type="entry name" value="PRK05290.1"/>
    <property type="match status" value="1"/>
</dbReference>
<dbReference type="PANTHER" id="PTHR30109">
    <property type="entry name" value="HYDROXYLAMINE REDUCTASE"/>
    <property type="match status" value="1"/>
</dbReference>
<dbReference type="PANTHER" id="PTHR30109:SF0">
    <property type="entry name" value="HYDROXYLAMINE REDUCTASE"/>
    <property type="match status" value="1"/>
</dbReference>
<dbReference type="Pfam" id="PF03063">
    <property type="entry name" value="Prismane"/>
    <property type="match status" value="1"/>
</dbReference>
<dbReference type="PIRSF" id="PIRSF000076">
    <property type="entry name" value="HCP"/>
    <property type="match status" value="1"/>
</dbReference>
<dbReference type="SUPFAM" id="SSF56821">
    <property type="entry name" value="Prismane protein-like"/>
    <property type="match status" value="1"/>
</dbReference>
<feature type="chain" id="PRO_1000092342" description="Hydroxylamine reductase">
    <location>
        <begin position="1"/>
        <end position="550"/>
    </location>
</feature>
<feature type="binding site" evidence="1">
    <location>
        <position position="7"/>
    </location>
    <ligand>
        <name>[4Fe-4S] cluster</name>
        <dbReference type="ChEBI" id="CHEBI:49883"/>
    </ligand>
</feature>
<feature type="binding site" evidence="1">
    <location>
        <position position="10"/>
    </location>
    <ligand>
        <name>[4Fe-4S] cluster</name>
        <dbReference type="ChEBI" id="CHEBI:49883"/>
    </ligand>
</feature>
<feature type="binding site" evidence="1">
    <location>
        <position position="19"/>
    </location>
    <ligand>
        <name>[4Fe-4S] cluster</name>
        <dbReference type="ChEBI" id="CHEBI:49883"/>
    </ligand>
</feature>
<feature type="binding site" evidence="1">
    <location>
        <position position="25"/>
    </location>
    <ligand>
        <name>[4Fe-4S] cluster</name>
        <dbReference type="ChEBI" id="CHEBI:49883"/>
    </ligand>
</feature>
<feature type="binding site" evidence="1">
    <location>
        <position position="244"/>
    </location>
    <ligand>
        <name>hybrid [4Fe-2O-2S] cluster</name>
        <dbReference type="ChEBI" id="CHEBI:60519"/>
    </ligand>
</feature>
<feature type="binding site" evidence="1">
    <location>
        <position position="268"/>
    </location>
    <ligand>
        <name>hybrid [4Fe-2O-2S] cluster</name>
        <dbReference type="ChEBI" id="CHEBI:60519"/>
    </ligand>
</feature>
<feature type="binding site" evidence="1">
    <location>
        <position position="312"/>
    </location>
    <ligand>
        <name>hybrid [4Fe-2O-2S] cluster</name>
        <dbReference type="ChEBI" id="CHEBI:60519"/>
    </ligand>
</feature>
<feature type="binding site" description="via persulfide group" evidence="1">
    <location>
        <position position="405"/>
    </location>
    <ligand>
        <name>hybrid [4Fe-2O-2S] cluster</name>
        <dbReference type="ChEBI" id="CHEBI:60519"/>
    </ligand>
</feature>
<feature type="binding site" evidence="1">
    <location>
        <position position="433"/>
    </location>
    <ligand>
        <name>hybrid [4Fe-2O-2S] cluster</name>
        <dbReference type="ChEBI" id="CHEBI:60519"/>
    </ligand>
</feature>
<feature type="binding site" evidence="1">
    <location>
        <position position="458"/>
    </location>
    <ligand>
        <name>hybrid [4Fe-2O-2S] cluster</name>
        <dbReference type="ChEBI" id="CHEBI:60519"/>
    </ligand>
</feature>
<feature type="binding site" evidence="1">
    <location>
        <position position="493"/>
    </location>
    <ligand>
        <name>hybrid [4Fe-2O-2S] cluster</name>
        <dbReference type="ChEBI" id="CHEBI:60519"/>
    </ligand>
</feature>
<feature type="binding site" evidence="1">
    <location>
        <position position="495"/>
    </location>
    <ligand>
        <name>hybrid [4Fe-2O-2S] cluster</name>
        <dbReference type="ChEBI" id="CHEBI:60519"/>
    </ligand>
</feature>
<feature type="modified residue" description="Cysteine persulfide" evidence="1">
    <location>
        <position position="405"/>
    </location>
</feature>
<protein>
    <recommendedName>
        <fullName evidence="1">Hydroxylamine reductase</fullName>
        <ecNumber evidence="1">1.7.99.1</ecNumber>
    </recommendedName>
    <alternativeName>
        <fullName evidence="1">Hybrid-cluster protein</fullName>
        <shortName evidence="1">HCP</shortName>
    </alternativeName>
    <alternativeName>
        <fullName evidence="1">Prismane protein</fullName>
    </alternativeName>
</protein>
<reference key="1">
    <citation type="journal article" date="2008" name="DNA Res.">
        <title>Determination of the genome sequence of Porphyromonas gingivalis strain ATCC 33277 and genomic comparison with strain W83 revealed extensive genome rearrangements in P. gingivalis.</title>
        <authorList>
            <person name="Naito M."/>
            <person name="Hirakawa H."/>
            <person name="Yamashita A."/>
            <person name="Ohara N."/>
            <person name="Shoji M."/>
            <person name="Yukitake H."/>
            <person name="Nakayama K."/>
            <person name="Toh H."/>
            <person name="Yoshimura F."/>
            <person name="Kuhara S."/>
            <person name="Hattori M."/>
            <person name="Hayashi T."/>
            <person name="Nakayama K."/>
        </authorList>
    </citation>
    <scope>NUCLEOTIDE SEQUENCE [LARGE SCALE GENOMIC DNA]</scope>
    <source>
        <strain>ATCC 33277 / DSM 20709 / CIP 103683 / JCM 12257 / NCTC 11834 / 2561</strain>
    </source>
</reference>
<accession>B2RJM1</accession>
<keyword id="KW-0004">4Fe-4S</keyword>
<keyword id="KW-0963">Cytoplasm</keyword>
<keyword id="KW-0408">Iron</keyword>
<keyword id="KW-0411">Iron-sulfur</keyword>
<keyword id="KW-0479">Metal-binding</keyword>
<keyword id="KW-0560">Oxidoreductase</keyword>